<comment type="function">
    <text evidence="3 5 7 8 9 10 11 12 13 14 17 18">Ribonuclease III double-stranded (ds) RNA-specific endoribonuclease that is involved in the initial step of microRNA (miRNA) biogenesis. Component of the microprocessor complex that is required to process primary miRNA transcripts (pri-miRNAs) to release precursor miRNA (pre-miRNA) in the nucleus. Within the microprocessor complex, DROSHA cleaves the 3' and 5' strands of a stem-loop in pri-miRNAs (processing center 11 bp from the dsRNA-ssRNA junction) to release hairpin-shaped pre-miRNAs that are subsequently cut by the cytoplasmic DICER to generate mature miRNAs. Involved also in pre-rRNA processing. Cleaves double-strand RNA and does not cleave single-strand RNA. Involved in the formation of GW bodies. Plays a role in growth homeostasis in response to autophagy in motor neurons (By similarity).</text>
</comment>
<comment type="catalytic activity">
    <reaction evidence="9 10 17 18">
        <text>Endonucleolytic cleavage to 5'-phosphomonoester.</text>
        <dbReference type="EC" id="3.1.26.3"/>
    </reaction>
</comment>
<comment type="cofactor">
    <cofactor evidence="25">
        <name>Mg(2+)</name>
        <dbReference type="ChEBI" id="CHEBI:18420"/>
    </cofactor>
    <cofactor evidence="25">
        <name>Mn(2+)</name>
        <dbReference type="ChEBI" id="CHEBI:29035"/>
    </cofactor>
    <text evidence="24">Each RNase III domain binds at least one Mg(2+) or Mn(2+) ion.</text>
</comment>
<comment type="subunit">
    <text evidence="3 6 8 10 11 12 15 17 18 19">Component of the microprocessor complex, or pri-miRNA processing protein complex, which is composed of DROSHA and DGCR8 (PubMed:15531877, PubMed:15574589, PubMed:15589161, PubMed:16751099, PubMed:26027739, PubMed:26748718). The microprocessor complex is a heterotrimer; each of the two DROSHA RNase III domains binds one DGCR8 (via C-terminal region) (PubMed:26027739, PubMed:26748718). Interacts with SP1 and SNIP1 (PubMed:10976766, PubMed:18632581). Interacts with SRRT/ARS2 (By similarity). Interacts with CPSF3 and ISY1; this interaction is in an RNA dependent manner (By similarity). Interacts with PUS10; interaction promotes pri-miRNAs processing (PubMed:31819270).</text>
</comment>
<comment type="interaction">
    <interactant intactId="EBI-528367">
        <id>Q9NRR4</id>
    </interactant>
    <interactant intactId="EBI-351962">
        <id>P17844</id>
        <label>DDX5</label>
    </interactant>
    <organismsDiffer>false</organismsDiffer>
    <experiments>6</experiments>
</comment>
<comment type="interaction">
    <interactant intactId="EBI-528367">
        <id>Q9NRR4</id>
    </interactant>
    <interactant intactId="EBI-528411">
        <id>Q8WYQ5</id>
        <label>DGCR8</label>
    </interactant>
    <organismsDiffer>false</organismsDiffer>
    <experiments>17</experiments>
</comment>
<comment type="interaction">
    <interactant intactId="EBI-528367">
        <id>Q9NRR4</id>
    </interactant>
    <interactant intactId="EBI-400434">
        <id>P35637</id>
        <label>FUS</label>
    </interactant>
    <organismsDiffer>false</organismsDiffer>
    <experiments>2</experiments>
</comment>
<comment type="interaction">
    <interactant intactId="EBI-528367">
        <id>Q9NRR4</id>
    </interactant>
    <interactant intactId="EBI-1567153">
        <id>Q15797</id>
        <label>SMAD1</label>
    </interactant>
    <organismsDiffer>false</organismsDiffer>
    <experiments>3</experiments>
</comment>
<comment type="interaction">
    <interactant intactId="EBI-528367">
        <id>Q9NRR4</id>
    </interactant>
    <interactant intactId="EBI-366083">
        <id>P04637</id>
        <label>TP53</label>
    </interactant>
    <organismsDiffer>false</organismsDiffer>
    <experiments>5</experiments>
</comment>
<comment type="subcellular location">
    <subcellularLocation>
        <location evidence="5 13 16">Nucleus</location>
    </subcellularLocation>
    <subcellularLocation>
        <location evidence="5">Nucleus</location>
        <location evidence="5">Nucleolus</location>
    </subcellularLocation>
    <subcellularLocation>
        <location evidence="3">Cytoplasm</location>
    </subcellularLocation>
    <text evidence="5 16">A fraction is translocated to the nucleolus during the S phase of the cell cycle. Localized in GW bodies (GWBs), also known as P-bodies.</text>
</comment>
<comment type="alternative products">
    <event type="alternative splicing"/>
    <isoform>
        <id>Q9NRR4-1</id>
        <name>1</name>
        <sequence type="displayed"/>
    </isoform>
    <isoform>
        <id>Q9NRR4-2</id>
        <name>2</name>
        <sequence type="described" ref="VSP_005777"/>
    </isoform>
    <isoform>
        <id>Q9NRR4-3</id>
        <name>3</name>
        <sequence type="described" ref="VSP_012450 VSP_012451 VSP_012452 VSP_012453"/>
    </isoform>
    <isoform>
        <id>Q9NRR4-4</id>
        <name>4</name>
        <sequence type="described" ref="VSP_012450 VSP_012451"/>
    </isoform>
</comment>
<comment type="tissue specificity">
    <text evidence="5">Ubiquitous.</text>
</comment>
<comment type="domain">
    <text evidence="10">The 2 RNase III domains form an intramolecular dimer where the domain 1 cuts the 3'strand while the domain 2 cleaves the 5'strand of pri-miRNAs, independently of each other.</text>
</comment>
<comment type="PTM">
    <text evidence="3">Degraded by autophagy in response to neuronal activity in motor neurons.</text>
</comment>
<comment type="similarity">
    <text evidence="24">Belongs to the ribonuclease III family.</text>
</comment>
<comment type="sequence caution" evidence="24">
    <conflict type="frameshift">
        <sequence resource="EMBL-CDS" id="AAD29637"/>
    </conflict>
</comment>
<comment type="sequence caution" evidence="24">
    <conflict type="erroneous initiation">
        <sequence resource="EMBL-CDS" id="BAA91511"/>
    </conflict>
    <text>Truncated N-terminus.</text>
</comment>
<comment type="online information" name="Protein Spotlight">
    <link uri="https://www.proteinspotlight.org/back_issues/087"/>
    <text>The dark side of RNA - Issue 87 of October 2007</text>
</comment>
<accession>Q9NRR4</accession>
<accession>E7EMP9</accession>
<accession>Q7Z5V2</accession>
<accession>Q86YH0</accession>
<accession>Q9NW73</accession>
<accession>Q9Y2V9</accession>
<accession>Q9Y4Y0</accession>
<feature type="chain" id="PRO_0000180468" description="Ribonuclease 3">
    <location>
        <begin position="1"/>
        <end position="1374"/>
    </location>
</feature>
<feature type="domain" description="RNase III 1">
    <location>
        <begin position="876"/>
        <end position="1056"/>
    </location>
</feature>
<feature type="domain" description="RNase III 2">
    <location>
        <begin position="1107"/>
        <end position="1233"/>
    </location>
</feature>
<feature type="domain" description="DRBM">
    <location>
        <begin position="1260"/>
        <end position="1334"/>
    </location>
</feature>
<feature type="region of interest" description="Disordered" evidence="4">
    <location>
        <begin position="1"/>
        <end position="95"/>
    </location>
</feature>
<feature type="region of interest" description="Disordered" evidence="4">
    <location>
        <begin position="130"/>
        <end position="406"/>
    </location>
</feature>
<feature type="region of interest" description="Necessary for interaction with DGCR8 and pri-miRNA processing activity" evidence="17 18">
    <location>
        <begin position="390"/>
        <end position="1365"/>
    </location>
</feature>
<feature type="region of interest" description="Disordered" evidence="4">
    <location>
        <begin position="452"/>
        <end position="497"/>
    </location>
</feature>
<feature type="compositionally biased region" description="Polar residues" evidence="4">
    <location>
        <begin position="59"/>
        <end position="68"/>
    </location>
</feature>
<feature type="compositionally biased region" description="Pro residues" evidence="4">
    <location>
        <begin position="70"/>
        <end position="95"/>
    </location>
</feature>
<feature type="compositionally biased region" description="Pro residues" evidence="4">
    <location>
        <begin position="145"/>
        <end position="160"/>
    </location>
</feature>
<feature type="compositionally biased region" description="Low complexity" evidence="4">
    <location>
        <begin position="182"/>
        <end position="202"/>
    </location>
</feature>
<feature type="compositionally biased region" description="Basic and acidic residues" evidence="4">
    <location>
        <begin position="216"/>
        <end position="289"/>
    </location>
</feature>
<feature type="compositionally biased region" description="Basic and acidic residues" evidence="4">
    <location>
        <begin position="298"/>
        <end position="313"/>
    </location>
</feature>
<feature type="compositionally biased region" description="Basic and acidic residues" evidence="4">
    <location>
        <begin position="364"/>
        <end position="399"/>
    </location>
</feature>
<feature type="compositionally biased region" description="Acidic residues" evidence="4">
    <location>
        <begin position="475"/>
        <end position="491"/>
    </location>
</feature>
<feature type="binding site" evidence="18">
    <location>
        <position position="536"/>
    </location>
    <ligand>
        <name>Zn(2+)</name>
        <dbReference type="ChEBI" id="CHEBI:29105"/>
        <label>1</label>
    </ligand>
</feature>
<feature type="binding site" evidence="18">
    <location>
        <position position="538"/>
    </location>
    <ligand>
        <name>Zn(2+)</name>
        <dbReference type="ChEBI" id="CHEBI:29105"/>
        <label>1</label>
    </ligand>
</feature>
<feature type="binding site" evidence="18">
    <location>
        <position position="549"/>
    </location>
    <ligand>
        <name>Zn(2+)</name>
        <dbReference type="ChEBI" id="CHEBI:29105"/>
        <label>1</label>
    </ligand>
</feature>
<feature type="binding site" evidence="18">
    <location>
        <position position="561"/>
    </location>
    <ligand>
        <name>Zn(2+)</name>
        <dbReference type="ChEBI" id="CHEBI:29105"/>
        <label>2</label>
    </ligand>
</feature>
<feature type="binding site" evidence="18">
    <location>
        <position position="609"/>
    </location>
    <ligand>
        <name>Zn(2+)</name>
        <dbReference type="ChEBI" id="CHEBI:29105"/>
        <label>2</label>
    </ligand>
</feature>
<feature type="binding site" evidence="18">
    <location>
        <position position="676"/>
    </location>
    <ligand>
        <name>Zn(2+)</name>
        <dbReference type="ChEBI" id="CHEBI:29105"/>
        <label>2</label>
    </ligand>
</feature>
<feature type="binding site" evidence="18">
    <location>
        <position position="680"/>
    </location>
    <ligand>
        <name>Zn(2+)</name>
        <dbReference type="ChEBI" id="CHEBI:29105"/>
        <label>2</label>
    </ligand>
</feature>
<feature type="binding site" evidence="2">
    <location>
        <position position="969"/>
    </location>
    <ligand>
        <name>Mg(2+)</name>
        <dbReference type="ChEBI" id="CHEBI:18420"/>
        <label>1</label>
    </ligand>
</feature>
<feature type="binding site" evidence="18">
    <location>
        <position position="1026"/>
    </location>
    <ligand>
        <name>Zn(2+)</name>
        <dbReference type="ChEBI" id="CHEBI:29105"/>
        <label>1</label>
    </ligand>
</feature>
<feature type="binding site" evidence="2">
    <location>
        <position position="1042"/>
    </location>
    <ligand>
        <name>Mg(2+)</name>
        <dbReference type="ChEBI" id="CHEBI:18420"/>
        <label>1</label>
    </ligand>
</feature>
<feature type="binding site" evidence="2 25">
    <location>
        <position position="1045"/>
    </location>
    <ligand>
        <name>Mg(2+)</name>
        <dbReference type="ChEBI" id="CHEBI:18420"/>
        <label>1</label>
    </ligand>
</feature>
<feature type="binding site" evidence="2">
    <location>
        <position position="1147"/>
    </location>
    <ligand>
        <name>Mg(2+)</name>
        <dbReference type="ChEBI" id="CHEBI:18420"/>
        <label>2</label>
    </ligand>
</feature>
<feature type="binding site" evidence="2">
    <location>
        <position position="1219"/>
    </location>
    <ligand>
        <name>Mg(2+)</name>
        <dbReference type="ChEBI" id="CHEBI:18420"/>
        <label>2</label>
    </ligand>
</feature>
<feature type="binding site" evidence="2 25">
    <location>
        <position position="1222"/>
    </location>
    <ligand>
        <name>Mg(2+)</name>
        <dbReference type="ChEBI" id="CHEBI:18420"/>
        <label>2</label>
    </ligand>
</feature>
<feature type="site" description="Important for activity" evidence="1">
    <location>
        <position position="1215"/>
    </location>
</feature>
<feature type="modified residue" description="Phosphoserine" evidence="27">
    <location>
        <position position="355"/>
    </location>
</feature>
<feature type="modified residue" description="Phosphoserine" evidence="26 27">
    <location>
        <position position="373"/>
    </location>
</feature>
<feature type="splice variant" id="VSP_005777" description="In isoform 2." evidence="20">
    <original>RERERERHRHRDNRRSPSLERSYKKEYKRSGRSYGLSVVPEPAGCTPELPGEIIKNTDSWAPPLEIVNH</original>
    <variation>S</variation>
    <location>
        <begin position="285"/>
        <end position="353"/>
    </location>
</feature>
<feature type="splice variant" id="VSP_012450" description="In isoform 3 and isoform 4." evidence="22 23">
    <location>
        <begin position="316"/>
        <end position="352"/>
    </location>
</feature>
<feature type="splice variant" id="VSP_012451" description="In isoform 3 and isoform 4." evidence="22 23">
    <original>H</original>
    <variation>S</variation>
    <location>
        <position position="353"/>
    </location>
</feature>
<feature type="splice variant" id="VSP_012452" description="In isoform 3." evidence="22">
    <original>EYAITNDKTKRPVALRTKTLADLLESFIAALY</original>
    <variation>VWSIYLLSNCDCCLLRPSLVFLQTMNEVCSLK</variation>
    <location>
        <begin position="1198"/>
        <end position="1229"/>
    </location>
</feature>
<feature type="splice variant" id="VSP_012453" description="In isoform 3." evidence="22">
    <location>
        <begin position="1230"/>
        <end position="1374"/>
    </location>
</feature>
<feature type="sequence variant" id="VAR_051866" description="In dbSNP:rs35342496.">
    <original>P</original>
    <variation>T</variation>
    <location>
        <position position="67"/>
    </location>
</feature>
<feature type="sequence variant" id="VAR_061778" description="In dbSNP:rs55656741.">
    <original>S</original>
    <variation>L</variation>
    <location>
        <position position="321"/>
    </location>
</feature>
<feature type="mutagenesis site" description="Impairs protein folding and stability; when associated with A-538." evidence="18">
    <original>C</original>
    <variation>A</variation>
    <location>
        <position position="536"/>
    </location>
</feature>
<feature type="mutagenesis site" description="Impairs protein folding and stability; when associated with A-536." evidence="18">
    <original>C</original>
    <variation>A</variation>
    <location>
        <position position="538"/>
    </location>
</feature>
<feature type="mutagenesis site" description="Impairs protein folding and stability." evidence="18">
    <original>C</original>
    <variation>A</variation>
    <location>
        <position position="561"/>
    </location>
</feature>
<feature type="mutagenesis site" description="Abolishes RNase activity." evidence="18">
    <original>RF</original>
    <variation>AA</variation>
    <location>
        <begin position="622"/>
        <end position="623"/>
    </location>
</feature>
<feature type="mutagenesis site" description="Impairs protein folding and stability." evidence="18">
    <original>C</original>
    <variation>A</variation>
    <location>
        <position position="676"/>
    </location>
</feature>
<feature type="mutagenesis site" description="Abolishes RNase activity." evidence="18">
    <original>RR</original>
    <variation>AA</variation>
    <location>
        <begin position="835"/>
        <end position="836"/>
    </location>
</feature>
<feature type="mutagenesis site" description="Impairs RNase activity." evidence="18">
    <original>R</original>
    <variation>M</variation>
    <location>
        <position position="914"/>
    </location>
</feature>
<feature type="mutagenesis site" description="Abolishes RNase activity; when associated with A-927." evidence="18">
    <original>R</original>
    <variation>A</variation>
    <location>
        <position position="923"/>
    </location>
</feature>
<feature type="mutagenesis site" description="Abolishes RNase activity; when associated with A-923." evidence="18">
    <original>Y</original>
    <variation>A</variation>
    <location>
        <position position="927"/>
    </location>
</feature>
<feature type="mutagenesis site" description="Abolishes RNase activity." evidence="18">
    <original>RKK</original>
    <variation>QQQ</variation>
    <location>
        <begin position="938"/>
        <end position="940"/>
    </location>
</feature>
<feature type="mutagenesis site" description="No effect on pri-miRNA processing activity." evidence="10">
    <original>E</original>
    <variation>A</variation>
    <variation>Q</variation>
    <location>
        <position position="993"/>
    </location>
</feature>
<feature type="mutagenesis site" description="Impairs pri-miRNA processing activity. Abolishes cleavage of the 3' strand. Abolishes enzyme activity; when associated with Q-1222." evidence="10 17">
    <original>E</original>
    <variation>Q</variation>
    <location>
        <position position="1045"/>
    </location>
</feature>
<feature type="mutagenesis site" description="Loss of one DGCR8 interaction site; no effect on the second DGCR8 interaction site." evidence="18">
    <original>V</original>
    <variation>E</variation>
    <location>
        <position position="1077"/>
    </location>
</feature>
<feature type="mutagenesis site" description="No effect on pri-miRNA processing activity." evidence="10">
    <original>E</original>
    <variation>A</variation>
    <variation>Q</variation>
    <location>
        <position position="1171"/>
    </location>
</feature>
<feature type="mutagenesis site" description="Abolishes interaction with DGCR8." evidence="18">
    <original>L</original>
    <variation>R</variation>
    <location>
        <position position="1194"/>
    </location>
</feature>
<feature type="mutagenesis site" description="Impairs pri-miRNA processing activity. Abolishes cleavage of the 5' strand. Abolishes enzyme activity; when associated with Q-1045." evidence="10 17">
    <original>E</original>
    <variation>Q</variation>
    <location>
        <position position="1222"/>
    </location>
</feature>
<feature type="mutagenesis site" description="Abolishes interaction with DGCR8." evidence="18">
    <original>V</original>
    <variation>D</variation>
    <location>
        <position position="1243"/>
    </location>
</feature>
<feature type="sequence conflict" description="In Ref. 4; CAB45133." evidence="24" ref="4">
    <original>YQYPPGYSH</original>
    <variation>RERERTSLE</variation>
    <location>
        <begin position="166"/>
        <end position="174"/>
    </location>
</feature>
<feature type="sequence conflict" description="In Ref. 4; CAB45133." evidence="24" ref="4">
    <original>L</original>
    <variation>P</variation>
    <location>
        <position position="612"/>
    </location>
</feature>
<feature type="sequence conflict" description="In Ref. 1; AAF80558." evidence="24" ref="1">
    <original>R</original>
    <variation>P</variation>
    <location>
        <position position="1020"/>
    </location>
</feature>
<feature type="sequence conflict" description="In Ref. 1; AAF80558." evidence="24" ref="1">
    <original>I</original>
    <variation>T</variation>
    <location>
        <position position="1230"/>
    </location>
</feature>
<feature type="sequence conflict" description="In Ref. 2; BX647724." evidence="24" ref="2">
    <original>L</original>
    <variation>R</variation>
    <location>
        <position position="1272"/>
    </location>
</feature>
<feature type="strand" evidence="28">
    <location>
        <begin position="413"/>
        <end position="415"/>
    </location>
</feature>
<feature type="strand" evidence="28">
    <location>
        <begin position="420"/>
        <end position="422"/>
    </location>
</feature>
<feature type="turn" evidence="29">
    <location>
        <begin position="426"/>
        <end position="428"/>
    </location>
</feature>
<feature type="helix" evidence="28">
    <location>
        <begin position="439"/>
        <end position="452"/>
    </location>
</feature>
<feature type="helix" evidence="28">
    <location>
        <begin position="455"/>
        <end position="462"/>
    </location>
</feature>
<feature type="helix" evidence="28">
    <location>
        <begin position="504"/>
        <end position="511"/>
    </location>
</feature>
<feature type="strand" evidence="28">
    <location>
        <begin position="531"/>
        <end position="535"/>
    </location>
</feature>
<feature type="helix" evidence="28">
    <location>
        <begin position="542"/>
        <end position="544"/>
    </location>
</feature>
<feature type="turn" evidence="28">
    <location>
        <begin position="547"/>
        <end position="550"/>
    </location>
</feature>
<feature type="strand" evidence="28">
    <location>
        <begin position="563"/>
        <end position="565"/>
    </location>
</feature>
<feature type="turn" evidence="28">
    <location>
        <begin position="568"/>
        <end position="570"/>
    </location>
</feature>
<feature type="strand" evidence="28">
    <location>
        <begin position="572"/>
        <end position="579"/>
    </location>
</feature>
<feature type="turn" evidence="28">
    <location>
        <begin position="582"/>
        <end position="584"/>
    </location>
</feature>
<feature type="strand" evidence="28">
    <location>
        <begin position="591"/>
        <end position="594"/>
    </location>
</feature>
<feature type="strand" evidence="28">
    <location>
        <begin position="597"/>
        <end position="610"/>
    </location>
</feature>
<feature type="strand" evidence="28">
    <location>
        <begin position="618"/>
        <end position="622"/>
    </location>
</feature>
<feature type="strand" evidence="28">
    <location>
        <begin position="625"/>
        <end position="633"/>
    </location>
</feature>
<feature type="helix" evidence="28">
    <location>
        <begin position="642"/>
        <end position="655"/>
    </location>
</feature>
<feature type="strand" evidence="28">
    <location>
        <begin position="678"/>
        <end position="688"/>
    </location>
</feature>
<feature type="strand" evidence="28">
    <location>
        <begin position="694"/>
        <end position="696"/>
    </location>
</feature>
<feature type="helix" evidence="28">
    <location>
        <begin position="699"/>
        <end position="708"/>
    </location>
</feature>
<feature type="strand" evidence="28">
    <location>
        <begin position="711"/>
        <end position="714"/>
    </location>
</feature>
<feature type="helix" evidence="28">
    <location>
        <begin position="719"/>
        <end position="724"/>
    </location>
</feature>
<feature type="helix" evidence="28">
    <location>
        <begin position="727"/>
        <end position="736"/>
    </location>
</feature>
<feature type="strand" evidence="28">
    <location>
        <begin position="741"/>
        <end position="743"/>
    </location>
</feature>
<feature type="strand" evidence="28">
    <location>
        <begin position="747"/>
        <end position="749"/>
    </location>
</feature>
<feature type="strand" evidence="28">
    <location>
        <begin position="751"/>
        <end position="753"/>
    </location>
</feature>
<feature type="strand" evidence="28">
    <location>
        <begin position="756"/>
        <end position="758"/>
    </location>
</feature>
<feature type="strand" evidence="29">
    <location>
        <begin position="763"/>
        <end position="766"/>
    </location>
</feature>
<feature type="strand" evidence="28">
    <location>
        <begin position="771"/>
        <end position="777"/>
    </location>
</feature>
<feature type="helix" evidence="28">
    <location>
        <begin position="780"/>
        <end position="782"/>
    </location>
</feature>
<feature type="helix" evidence="28">
    <location>
        <begin position="784"/>
        <end position="786"/>
    </location>
</feature>
<feature type="helix" evidence="28">
    <location>
        <begin position="788"/>
        <end position="806"/>
    </location>
</feature>
<feature type="helix" evidence="28">
    <location>
        <begin position="812"/>
        <end position="829"/>
    </location>
</feature>
<feature type="strand" evidence="28">
    <location>
        <begin position="832"/>
        <end position="843"/>
    </location>
</feature>
<feature type="strand" evidence="29">
    <location>
        <begin position="848"/>
        <end position="853"/>
    </location>
</feature>
<feature type="helix" evidence="28">
    <location>
        <begin position="854"/>
        <end position="860"/>
    </location>
</feature>
<feature type="helix" evidence="28">
    <location>
        <begin position="863"/>
        <end position="883"/>
    </location>
</feature>
<feature type="helix" evidence="28">
    <location>
        <begin position="890"/>
        <end position="896"/>
    </location>
</feature>
<feature type="helix" evidence="28">
    <location>
        <begin position="910"/>
        <end position="919"/>
    </location>
</feature>
<feature type="helix" evidence="28">
    <location>
        <begin position="930"/>
        <end position="932"/>
    </location>
</feature>
<feature type="turn" evidence="28">
    <location>
        <begin position="933"/>
        <end position="937"/>
    </location>
</feature>
<feature type="helix" evidence="28">
    <location>
        <begin position="942"/>
        <end position="949"/>
    </location>
</feature>
<feature type="helix" evidence="28">
    <location>
        <begin position="966"/>
        <end position="987"/>
    </location>
</feature>
<feature type="helix" evidence="28">
    <location>
        <begin position="993"/>
        <end position="1003"/>
    </location>
</feature>
<feature type="helix" evidence="28">
    <location>
        <begin position="1006"/>
        <end position="1016"/>
    </location>
</feature>
<feature type="helix" evidence="28">
    <location>
        <begin position="1018"/>
        <end position="1020"/>
    </location>
</feature>
<feature type="helix" evidence="28">
    <location>
        <begin position="1028"/>
        <end position="1030"/>
    </location>
</feature>
<feature type="helix" evidence="28">
    <location>
        <begin position="1033"/>
        <end position="1054"/>
    </location>
</feature>
<feature type="helix" evidence="28">
    <location>
        <begin position="1057"/>
        <end position="1068"/>
    </location>
</feature>
<feature type="helix" evidence="28">
    <location>
        <begin position="1072"/>
        <end position="1079"/>
    </location>
</feature>
<feature type="helix" evidence="28">
    <location>
        <begin position="1085"/>
        <end position="1089"/>
    </location>
</feature>
<feature type="strand" evidence="28">
    <location>
        <begin position="1090"/>
        <end position="1092"/>
    </location>
</feature>
<feature type="helix" evidence="28">
    <location>
        <begin position="1095"/>
        <end position="1097"/>
    </location>
</feature>
<feature type="turn" evidence="28">
    <location>
        <begin position="1098"/>
        <end position="1100"/>
    </location>
</feature>
<feature type="helix" evidence="28">
    <location>
        <begin position="1102"/>
        <end position="1114"/>
    </location>
</feature>
<feature type="helix" evidence="28">
    <location>
        <begin position="1121"/>
        <end position="1127"/>
    </location>
</feature>
<feature type="strand" evidence="28">
    <location>
        <begin position="1131"/>
        <end position="1133"/>
    </location>
</feature>
<feature type="strand" evidence="28">
    <location>
        <begin position="1137"/>
        <end position="1141"/>
    </location>
</feature>
<feature type="helix" evidence="28">
    <location>
        <begin position="1144"/>
        <end position="1165"/>
    </location>
</feature>
<feature type="helix" evidence="28">
    <location>
        <begin position="1171"/>
        <end position="1181"/>
    </location>
</feature>
<feature type="helix" evidence="28">
    <location>
        <begin position="1184"/>
        <end position="1193"/>
    </location>
</feature>
<feature type="helix" evidence="28">
    <location>
        <begin position="1196"/>
        <end position="1198"/>
    </location>
</feature>
<feature type="helix" evidence="28">
    <location>
        <begin position="1204"/>
        <end position="1207"/>
    </location>
</feature>
<feature type="helix" evidence="28">
    <location>
        <begin position="1214"/>
        <end position="1231"/>
    </location>
</feature>
<feature type="helix" evidence="28">
    <location>
        <begin position="1234"/>
        <end position="1244"/>
    </location>
</feature>
<feature type="helix" evidence="28">
    <location>
        <begin position="1246"/>
        <end position="1248"/>
    </location>
</feature>
<feature type="helix" evidence="28">
    <location>
        <begin position="1249"/>
        <end position="1255"/>
    </location>
</feature>
<feature type="turn" evidence="28">
    <location>
        <begin position="1256"/>
        <end position="1258"/>
    </location>
</feature>
<feature type="helix" evidence="28">
    <location>
        <begin position="1261"/>
        <end position="1270"/>
    </location>
</feature>
<feature type="strand" evidence="28">
    <location>
        <begin position="1275"/>
        <end position="1277"/>
    </location>
</feature>
<feature type="strand" evidence="28">
    <location>
        <begin position="1283"/>
        <end position="1291"/>
    </location>
</feature>
<feature type="strand" evidence="29">
    <location>
        <begin position="1293"/>
        <end position="1295"/>
    </location>
</feature>
<feature type="strand" evidence="28">
    <location>
        <begin position="1297"/>
        <end position="1304"/>
    </location>
</feature>
<feature type="strand" evidence="28">
    <location>
        <begin position="1307"/>
        <end position="1316"/>
    </location>
</feature>
<feature type="helix" evidence="28">
    <location>
        <begin position="1317"/>
        <end position="1331"/>
    </location>
</feature>
<feature type="helix" evidence="28">
    <location>
        <begin position="1335"/>
        <end position="1347"/>
    </location>
</feature>
<feature type="helix" evidence="28">
    <location>
        <begin position="1349"/>
        <end position="1359"/>
    </location>
</feature>
<sequence>MMQGNTCHRMSFHPGRGCPRGRGGHGARPSAPSFRPQNLRLLHPQQPPVQYQYEPPSAPSTTFSNSPAPNFLPPRPDFVPFPPPMPPSAQGPLPPCPIRPPFPNHQMRHPFPVPPCFPPMPPPMPCPNNPPVPGAPPGQGTFPFMMPPPSMPHPPPPPVMPQQVNYQYPPGYSHHNFPPPSFNSFQNNPSSFLPSANNSSSPHFRHLPPYPLPKAPSERRSPERLKHYDDHRHRDHSHGRGERHRSLDRRERGRSPDRRRQDSRYRSDYDRGRTPSRHRSYERSRERERERHRHRDNRRSPSLERSYKKEYKRSGRSYGLSVVPEPAGCTPELPGEIIKNTDSWAPPLEIVNHRSPSREKKRARWEEEKDRWSDNQSSGKDKNYTSIKEKEPEETMPDKNEEEEEELLKPVWIRCTHSENYYSSDPMDQVGDSTVVGTSRLRDLYDKFEEELGSRQEKAKAARPPWEPPKTKLDEDLESSSESECESDEDSTCSSSSDSEVFDVIAEIKRKKAHPDRLHDELWYNDPGQMNDGPLCKCSAKARRTGIRHSIYPGEEAIKPCRPMTNNAGRLFHYRITVSPPTNFLTDRPTVIEYDDHEYIFEGFSMFAHAPLTNIPLCKVIRFNIDYTIHFIEEMMPENFCVKGLELFSLFLFRDILELYDWNLKGPLFEDSPPCCPRFHFMPRFVRFLPDGGKEVLSMHQILLYLLRCSKALVPEEEIANMLQWEELEWQKYAEECKGMIVTNPGTKPSSVRIDQLDREQFNPDVITFPIIVHFGIRPAQLSYAGDPQYQKLWKSYVKLRHLLANSPKVKQTDKQKLAQREEALQKIRQKNTMRREVTVELSSQGFWKTGIRSDVCQHAMMLPVLTHHIRYHQCLMHLDKLIGYTFQDRCLLQLAMTHPSHHLNFGMNPDHARNSLSNCGIRQPKYGDRKVHHMHMRKKGINTLINIMSRLGQDDPTPSRINHNERLEFLGDAVVEFLTSVHLYYLFPSLEEGGLATYRTAIVQNQHLAMLAKKLELDRFMLYAHGPDLCRESDLRHAMANCFEALIGAVYLEGSLEEAKQLFGRLLFNDPDLREVWLNYPLHPLQLQEPNTDRQLIETSPVLQKLTEFEEAIGVIFTHVRLLARAFTLRTVGFNHLTLGHNQRMEFLGDSIMQLVATEYLFIHFPDHHEGHLTLLRSSLVNNRTQAKVAEELGMQEYAITNDKTKRPVALRTKTLADLLESFIAALYIDKDLEYVHTFMNVCFFPRLKEFILNQDWNDPKSQLQQCCLTLRTEGKEPDIPLYKTLQTVGPSHARTYTVAVYFKGERIGCGKGPSIQQAEMGAAMDALEKYNFPQMAHQKRFIERKYRQELKEMRWEREHQEREPDETEDIKK</sequence>
<protein>
    <recommendedName>
        <fullName>Ribonuclease 3</fullName>
        <ecNumber evidence="9 10 17 18">3.1.26.3</ecNumber>
    </recommendedName>
    <alternativeName>
        <fullName evidence="21">Protein Drosha</fullName>
    </alternativeName>
    <alternativeName>
        <fullName>Ribonuclease III</fullName>
        <shortName>RNase III</shortName>
    </alternativeName>
    <alternativeName>
        <fullName>p241</fullName>
    </alternativeName>
</protein>
<evidence type="ECO:0000250" key="1"/>
<evidence type="ECO:0000250" key="2">
    <source>
        <dbReference type="UniProtKB" id="O67082"/>
    </source>
</evidence>
<evidence type="ECO:0000250" key="3">
    <source>
        <dbReference type="UniProtKB" id="Q5HZJ0"/>
    </source>
</evidence>
<evidence type="ECO:0000256" key="4">
    <source>
        <dbReference type="SAM" id="MobiDB-lite"/>
    </source>
</evidence>
<evidence type="ECO:0000269" key="5">
    <source>
    </source>
</evidence>
<evidence type="ECO:0000269" key="6">
    <source>
    </source>
</evidence>
<evidence type="ECO:0000269" key="7">
    <source>
    </source>
</evidence>
<evidence type="ECO:0000269" key="8">
    <source>
    </source>
</evidence>
<evidence type="ECO:0000269" key="9">
    <source>
    </source>
</evidence>
<evidence type="ECO:0000269" key="10">
    <source>
    </source>
</evidence>
<evidence type="ECO:0000269" key="11">
    <source>
    </source>
</evidence>
<evidence type="ECO:0000269" key="12">
    <source>
    </source>
</evidence>
<evidence type="ECO:0000269" key="13">
    <source>
    </source>
</evidence>
<evidence type="ECO:0000269" key="14">
    <source>
    </source>
</evidence>
<evidence type="ECO:0000269" key="15">
    <source>
    </source>
</evidence>
<evidence type="ECO:0000269" key="16">
    <source>
    </source>
</evidence>
<evidence type="ECO:0000269" key="17">
    <source>
    </source>
</evidence>
<evidence type="ECO:0000269" key="18">
    <source>
    </source>
</evidence>
<evidence type="ECO:0000269" key="19">
    <source>
    </source>
</evidence>
<evidence type="ECO:0000303" key="20">
    <source>
    </source>
</evidence>
<evidence type="ECO:0000303" key="21">
    <source>
    </source>
</evidence>
<evidence type="ECO:0000303" key="22">
    <source>
    </source>
</evidence>
<evidence type="ECO:0000303" key="23">
    <source>
    </source>
</evidence>
<evidence type="ECO:0000305" key="24"/>
<evidence type="ECO:0000305" key="25">
    <source>
    </source>
</evidence>
<evidence type="ECO:0007744" key="26">
    <source>
    </source>
</evidence>
<evidence type="ECO:0007744" key="27">
    <source>
    </source>
</evidence>
<evidence type="ECO:0007829" key="28">
    <source>
        <dbReference type="PDB" id="9ASM"/>
    </source>
</evidence>
<evidence type="ECO:0007829" key="29">
    <source>
        <dbReference type="PDB" id="9ASO"/>
    </source>
</evidence>
<keyword id="KW-0002">3D-structure</keyword>
<keyword id="KW-0025">Alternative splicing</keyword>
<keyword id="KW-0963">Cytoplasm</keyword>
<keyword id="KW-0255">Endonuclease</keyword>
<keyword id="KW-0378">Hydrolase</keyword>
<keyword id="KW-0460">Magnesium</keyword>
<keyword id="KW-0464">Manganese</keyword>
<keyword id="KW-0479">Metal-binding</keyword>
<keyword id="KW-0540">Nuclease</keyword>
<keyword id="KW-0539">Nucleus</keyword>
<keyword id="KW-0597">Phosphoprotein</keyword>
<keyword id="KW-1267">Proteomics identification</keyword>
<keyword id="KW-1185">Reference proteome</keyword>
<keyword id="KW-0677">Repeat</keyword>
<keyword id="KW-0690">Ribosome biogenesis</keyword>
<keyword id="KW-0694">RNA-binding</keyword>
<keyword id="KW-0943">RNA-mediated gene silencing</keyword>
<name>RNC_HUMAN</name>
<gene>
    <name type="primary">DROSHA</name>
    <name type="synonym">RN3</name>
    <name type="synonym">RNASE3L</name>
    <name type="synonym">RNASEN</name>
</gene>
<dbReference type="EC" id="3.1.26.3" evidence="9 10 17 18"/>
<dbReference type="EMBL" id="AF189011">
    <property type="protein sequence ID" value="AAF80558.1"/>
    <property type="molecule type" value="mRNA"/>
</dbReference>
<dbReference type="EMBL" id="BX647724">
    <property type="status" value="NOT_ANNOTATED_CDS"/>
    <property type="molecule type" value="mRNA"/>
</dbReference>
<dbReference type="EMBL" id="AC008768">
    <property type="status" value="NOT_ANNOTATED_CDS"/>
    <property type="molecule type" value="Genomic_DNA"/>
</dbReference>
<dbReference type="EMBL" id="AC022417">
    <property type="status" value="NOT_ANNOTATED_CDS"/>
    <property type="molecule type" value="Genomic_DNA"/>
</dbReference>
<dbReference type="EMBL" id="AC106802">
    <property type="status" value="NOT_ANNOTATED_CDS"/>
    <property type="molecule type" value="Genomic_DNA"/>
</dbReference>
<dbReference type="EMBL" id="AJ242976">
    <property type="protein sequence ID" value="CAB45133.1"/>
    <property type="molecule type" value="mRNA"/>
</dbReference>
<dbReference type="EMBL" id="AK001121">
    <property type="protein sequence ID" value="BAA91511.1"/>
    <property type="status" value="ALT_INIT"/>
    <property type="molecule type" value="mRNA"/>
</dbReference>
<dbReference type="EMBL" id="BC041162">
    <property type="protein sequence ID" value="AAH41162.1"/>
    <property type="molecule type" value="mRNA"/>
</dbReference>
<dbReference type="EMBL" id="BC054003">
    <property type="protein sequence ID" value="AAH54003.1"/>
    <property type="molecule type" value="mRNA"/>
</dbReference>
<dbReference type="EMBL" id="AF116910">
    <property type="protein sequence ID" value="AAD29637.1"/>
    <property type="status" value="ALT_FRAME"/>
    <property type="molecule type" value="mRNA"/>
</dbReference>
<dbReference type="CCDS" id="CCDS47194.1">
    <molecule id="Q9NRR4-4"/>
</dbReference>
<dbReference type="CCDS" id="CCDS47195.1">
    <molecule id="Q9NRR4-1"/>
</dbReference>
<dbReference type="RefSeq" id="NP_001093882.1">
    <molecule id="Q9NRR4-4"/>
    <property type="nucleotide sequence ID" value="NM_001100412.2"/>
</dbReference>
<dbReference type="RefSeq" id="NP_001369437.1">
    <molecule id="Q9NRR4-1"/>
    <property type="nucleotide sequence ID" value="NM_001382508.1"/>
</dbReference>
<dbReference type="RefSeq" id="NP_037367.3">
    <molecule id="Q9NRR4-1"/>
    <property type="nucleotide sequence ID" value="NM_013235.4"/>
</dbReference>
<dbReference type="RefSeq" id="XP_005248348.1">
    <property type="nucleotide sequence ID" value="XM_005248291.3"/>
</dbReference>
<dbReference type="RefSeq" id="XP_005248351.1">
    <property type="nucleotide sequence ID" value="XM_005248294.3"/>
</dbReference>
<dbReference type="PDB" id="2KHX">
    <property type="method" value="NMR"/>
    <property type="chains" value="A=1259-1337"/>
</dbReference>
<dbReference type="PDB" id="2NA2">
    <property type="method" value="NMR"/>
    <property type="chains" value="A=1259-1337"/>
</dbReference>
<dbReference type="PDB" id="5B16">
    <property type="method" value="X-ray"/>
    <property type="resolution" value="3.20 A"/>
    <property type="chains" value="A=411-458, A=522-711, A=850-1365"/>
</dbReference>
<dbReference type="PDB" id="6LXD">
    <property type="method" value="EM"/>
    <property type="resolution" value="3.90 A"/>
    <property type="chains" value="A=391-1374"/>
</dbReference>
<dbReference type="PDB" id="6LXE">
    <property type="method" value="EM"/>
    <property type="resolution" value="4.20 A"/>
    <property type="chains" value="A=391-1374"/>
</dbReference>
<dbReference type="PDB" id="6V5B">
    <property type="method" value="EM"/>
    <property type="resolution" value="3.70 A"/>
    <property type="chains" value="A=353-1365"/>
</dbReference>
<dbReference type="PDB" id="6V5C">
    <property type="method" value="EM"/>
    <property type="resolution" value="4.40 A"/>
    <property type="chains" value="A=353-1365"/>
</dbReference>
<dbReference type="PDB" id="9ASM">
    <property type="method" value="EM"/>
    <property type="resolution" value="2.80 A"/>
    <property type="chains" value="A=1-1374"/>
</dbReference>
<dbReference type="PDB" id="9ASN">
    <property type="method" value="EM"/>
    <property type="resolution" value="3.20 A"/>
    <property type="chains" value="A=1-1374"/>
</dbReference>
<dbReference type="PDB" id="9ASO">
    <property type="method" value="EM"/>
    <property type="resolution" value="2.90 A"/>
    <property type="chains" value="A=1-1374"/>
</dbReference>
<dbReference type="PDB" id="9ASP">
    <property type="method" value="EM"/>
    <property type="resolution" value="3.20 A"/>
    <property type="chains" value="A=1-1374"/>
</dbReference>
<dbReference type="PDB" id="9ASQ">
    <property type="method" value="EM"/>
    <property type="resolution" value="3.00 A"/>
    <property type="chains" value="A=1-1374"/>
</dbReference>
<dbReference type="PDBsum" id="2KHX"/>
<dbReference type="PDBsum" id="2NA2"/>
<dbReference type="PDBsum" id="5B16"/>
<dbReference type="PDBsum" id="6LXD"/>
<dbReference type="PDBsum" id="6LXE"/>
<dbReference type="PDBsum" id="6V5B"/>
<dbReference type="PDBsum" id="6V5C"/>
<dbReference type="PDBsum" id="9ASM"/>
<dbReference type="PDBsum" id="9ASN"/>
<dbReference type="PDBsum" id="9ASO"/>
<dbReference type="PDBsum" id="9ASP"/>
<dbReference type="PDBsum" id="9ASQ"/>
<dbReference type="BMRB" id="Q9NRR4"/>
<dbReference type="EMDB" id="EMD-21051"/>
<dbReference type="EMDB" id="EMD-21052"/>
<dbReference type="EMDB" id="EMD-30005"/>
<dbReference type="EMDB" id="EMD-30006"/>
<dbReference type="EMDB" id="EMD-43819"/>
<dbReference type="EMDB" id="EMD-43820"/>
<dbReference type="EMDB" id="EMD-43821"/>
<dbReference type="EMDB" id="EMD-43822"/>
<dbReference type="EMDB" id="EMD-43823"/>
<dbReference type="SMR" id="Q9NRR4"/>
<dbReference type="BioGRID" id="118870">
    <property type="interactions" value="177"/>
</dbReference>
<dbReference type="ComplexPortal" id="CPX-3080">
    <property type="entry name" value="Microprocessor complex"/>
</dbReference>
<dbReference type="CORUM" id="Q9NRR4"/>
<dbReference type="DIP" id="DIP-33300N"/>
<dbReference type="FunCoup" id="Q9NRR4">
    <property type="interactions" value="4357"/>
</dbReference>
<dbReference type="IntAct" id="Q9NRR4">
    <property type="interactions" value="54"/>
</dbReference>
<dbReference type="MINT" id="Q9NRR4"/>
<dbReference type="STRING" id="9606.ENSP00000425979"/>
<dbReference type="GlyGen" id="Q9NRR4">
    <property type="glycosylation" value="1 site"/>
</dbReference>
<dbReference type="iPTMnet" id="Q9NRR4"/>
<dbReference type="PhosphoSitePlus" id="Q9NRR4"/>
<dbReference type="SwissPalm" id="Q9NRR4"/>
<dbReference type="BioMuta" id="DROSHA"/>
<dbReference type="DMDM" id="20139357"/>
<dbReference type="jPOST" id="Q9NRR4"/>
<dbReference type="MassIVE" id="Q9NRR4"/>
<dbReference type="PaxDb" id="9606-ENSP00000425979"/>
<dbReference type="PeptideAtlas" id="Q9NRR4"/>
<dbReference type="ProteomicsDB" id="16990"/>
<dbReference type="ProteomicsDB" id="82409">
    <molecule id="Q9NRR4-1"/>
</dbReference>
<dbReference type="ProteomicsDB" id="82410">
    <molecule id="Q9NRR4-2"/>
</dbReference>
<dbReference type="ProteomicsDB" id="82411">
    <molecule id="Q9NRR4-3"/>
</dbReference>
<dbReference type="Pumba" id="Q9NRR4"/>
<dbReference type="Antibodypedia" id="22652">
    <property type="antibodies" value="292 antibodies from 36 providers"/>
</dbReference>
<dbReference type="DNASU" id="29102"/>
<dbReference type="Ensembl" id="ENST00000344624.8">
    <molecule id="Q9NRR4-1"/>
    <property type="protein sequence ID" value="ENSP00000339845.3"/>
    <property type="gene ID" value="ENSG00000113360.17"/>
</dbReference>
<dbReference type="Ensembl" id="ENST00000511367.6">
    <molecule id="Q9NRR4-1"/>
    <property type="protein sequence ID" value="ENSP00000425979.2"/>
    <property type="gene ID" value="ENSG00000113360.17"/>
</dbReference>
<dbReference type="Ensembl" id="ENST00000513349.5">
    <molecule id="Q9NRR4-4"/>
    <property type="protein sequence ID" value="ENSP00000424161.1"/>
    <property type="gene ID" value="ENSG00000113360.17"/>
</dbReference>
<dbReference type="GeneID" id="29102"/>
<dbReference type="KEGG" id="hsa:29102"/>
<dbReference type="MANE-Select" id="ENST00000344624.8">
    <property type="protein sequence ID" value="ENSP00000339845.3"/>
    <property type="RefSeq nucleotide sequence ID" value="NM_001382508.1"/>
    <property type="RefSeq protein sequence ID" value="NP_001369437.1"/>
</dbReference>
<dbReference type="UCSC" id="uc003jhg.3">
    <molecule id="Q9NRR4-1"/>
    <property type="organism name" value="human"/>
</dbReference>
<dbReference type="AGR" id="HGNC:17904"/>
<dbReference type="CTD" id="29102"/>
<dbReference type="DisGeNET" id="29102"/>
<dbReference type="GeneCards" id="DROSHA"/>
<dbReference type="HGNC" id="HGNC:17904">
    <property type="gene designation" value="DROSHA"/>
</dbReference>
<dbReference type="HPA" id="ENSG00000113360">
    <property type="expression patterns" value="Low tissue specificity"/>
</dbReference>
<dbReference type="MalaCards" id="DROSHA"/>
<dbReference type="MIM" id="608828">
    <property type="type" value="gene"/>
</dbReference>
<dbReference type="neXtProt" id="NX_Q9NRR4"/>
<dbReference type="OpenTargets" id="ENSG00000113360"/>
<dbReference type="PharmGKB" id="PA142671060"/>
<dbReference type="VEuPathDB" id="HostDB:ENSG00000113360"/>
<dbReference type="eggNOG" id="KOG1817">
    <property type="taxonomic scope" value="Eukaryota"/>
</dbReference>
<dbReference type="GeneTree" id="ENSGT00730000111052"/>
<dbReference type="HOGENOM" id="CLU_004383_0_0_1"/>
<dbReference type="InParanoid" id="Q9NRR4"/>
<dbReference type="OMA" id="ENFTIHE"/>
<dbReference type="OrthoDB" id="67027at2759"/>
<dbReference type="PAN-GO" id="Q9NRR4">
    <property type="GO annotations" value="5 GO annotations based on evolutionary models"/>
</dbReference>
<dbReference type="PhylomeDB" id="Q9NRR4"/>
<dbReference type="TreeFam" id="TF314734"/>
<dbReference type="BRENDA" id="3.1.26.3">
    <property type="organism ID" value="2681"/>
</dbReference>
<dbReference type="PathwayCommons" id="Q9NRR4"/>
<dbReference type="Reactome" id="R-HSA-203927">
    <property type="pathway name" value="MicroRNA (miRNA) biogenesis"/>
</dbReference>
<dbReference type="SignaLink" id="Q9NRR4"/>
<dbReference type="SIGNOR" id="Q9NRR4"/>
<dbReference type="BioGRID-ORCS" id="29102">
    <property type="hits" value="313 hits in 1167 CRISPR screens"/>
</dbReference>
<dbReference type="CD-CODE" id="91857CE7">
    <property type="entry name" value="Nucleolus"/>
</dbReference>
<dbReference type="CD-CODE" id="DEE660B4">
    <property type="entry name" value="Stress granule"/>
</dbReference>
<dbReference type="ChiTaRS" id="DROSHA">
    <property type="organism name" value="human"/>
</dbReference>
<dbReference type="EvolutionaryTrace" id="Q9NRR4"/>
<dbReference type="GeneWiki" id="RNASEN"/>
<dbReference type="GenomeRNAi" id="29102"/>
<dbReference type="Pharos" id="Q9NRR4">
    <property type="development level" value="Tbio"/>
</dbReference>
<dbReference type="PRO" id="PR:Q9NRR4"/>
<dbReference type="Proteomes" id="UP000005640">
    <property type="component" value="Chromosome 5"/>
</dbReference>
<dbReference type="RNAct" id="Q9NRR4">
    <property type="molecule type" value="protein"/>
</dbReference>
<dbReference type="Bgee" id="ENSG00000113360">
    <property type="expression patterns" value="Expressed in endothelial cell and 194 other cell types or tissues"/>
</dbReference>
<dbReference type="ExpressionAtlas" id="Q9NRR4">
    <property type="expression patterns" value="baseline and differential"/>
</dbReference>
<dbReference type="GO" id="GO:0005829">
    <property type="term" value="C:cytosol"/>
    <property type="evidence" value="ECO:0000314"/>
    <property type="project" value="HPA"/>
</dbReference>
<dbReference type="GO" id="GO:0098978">
    <property type="term" value="C:glutamatergic synapse"/>
    <property type="evidence" value="ECO:0007669"/>
    <property type="project" value="Ensembl"/>
</dbReference>
<dbReference type="GO" id="GO:0070877">
    <property type="term" value="C:microprocessor complex"/>
    <property type="evidence" value="ECO:0000314"/>
    <property type="project" value="BHF-UCL"/>
</dbReference>
<dbReference type="GO" id="GO:0005730">
    <property type="term" value="C:nucleolus"/>
    <property type="evidence" value="ECO:0007669"/>
    <property type="project" value="UniProtKB-SubCell"/>
</dbReference>
<dbReference type="GO" id="GO:0005654">
    <property type="term" value="C:nucleoplasm"/>
    <property type="evidence" value="ECO:0000314"/>
    <property type="project" value="HPA"/>
</dbReference>
<dbReference type="GO" id="GO:0005634">
    <property type="term" value="C:nucleus"/>
    <property type="evidence" value="ECO:0000318"/>
    <property type="project" value="GO_Central"/>
</dbReference>
<dbReference type="GO" id="GO:0014069">
    <property type="term" value="C:postsynaptic density"/>
    <property type="evidence" value="ECO:0007669"/>
    <property type="project" value="Ensembl"/>
</dbReference>
<dbReference type="GO" id="GO:0017151">
    <property type="term" value="F:DEAD/H-box RNA helicase binding"/>
    <property type="evidence" value="ECO:0000353"/>
    <property type="project" value="BHF-UCL"/>
</dbReference>
<dbReference type="GO" id="GO:0001530">
    <property type="term" value="F:lipopolysaccharide binding"/>
    <property type="evidence" value="ECO:0000314"/>
    <property type="project" value="UniProtKB"/>
</dbReference>
<dbReference type="GO" id="GO:0046872">
    <property type="term" value="F:metal ion binding"/>
    <property type="evidence" value="ECO:0007669"/>
    <property type="project" value="UniProtKB-KW"/>
</dbReference>
<dbReference type="GO" id="GO:0070878">
    <property type="term" value="F:primary miRNA binding"/>
    <property type="evidence" value="ECO:0000353"/>
    <property type="project" value="ARUK-UCL"/>
</dbReference>
<dbReference type="GO" id="GO:0042803">
    <property type="term" value="F:protein homodimerization activity"/>
    <property type="evidence" value="ECO:0000314"/>
    <property type="project" value="BHF-UCL"/>
</dbReference>
<dbReference type="GO" id="GO:0070412">
    <property type="term" value="F:R-SMAD binding"/>
    <property type="evidence" value="ECO:0000353"/>
    <property type="project" value="BHF-UCL"/>
</dbReference>
<dbReference type="GO" id="GO:0004525">
    <property type="term" value="F:ribonuclease III activity"/>
    <property type="evidence" value="ECO:0000314"/>
    <property type="project" value="WormBase"/>
</dbReference>
<dbReference type="GO" id="GO:0003723">
    <property type="term" value="F:RNA binding"/>
    <property type="evidence" value="ECO:0000353"/>
    <property type="project" value="ARUK-UCL"/>
</dbReference>
<dbReference type="GO" id="GO:0046332">
    <property type="term" value="F:SMAD binding"/>
    <property type="evidence" value="ECO:0000353"/>
    <property type="project" value="BHF-UCL"/>
</dbReference>
<dbReference type="GO" id="GO:0050829">
    <property type="term" value="P:defense response to Gram-negative bacterium"/>
    <property type="evidence" value="ECO:0000314"/>
    <property type="project" value="UniProtKB"/>
</dbReference>
<dbReference type="GO" id="GO:0050830">
    <property type="term" value="P:defense response to Gram-positive bacterium"/>
    <property type="evidence" value="ECO:0000314"/>
    <property type="project" value="UniProtKB"/>
</dbReference>
<dbReference type="GO" id="GO:0010586">
    <property type="term" value="P:miRNA metabolic process"/>
    <property type="evidence" value="ECO:0007669"/>
    <property type="project" value="Ensembl"/>
</dbReference>
<dbReference type="GO" id="GO:0010628">
    <property type="term" value="P:positive regulation of gene expression"/>
    <property type="evidence" value="ECO:0007669"/>
    <property type="project" value="Ensembl"/>
</dbReference>
<dbReference type="GO" id="GO:0031054">
    <property type="term" value="P:pre-miRNA processing"/>
    <property type="evidence" value="ECO:0000318"/>
    <property type="project" value="GO_Central"/>
</dbReference>
<dbReference type="GO" id="GO:0031053">
    <property type="term" value="P:primary miRNA processing"/>
    <property type="evidence" value="ECO:0000314"/>
    <property type="project" value="WormBase"/>
</dbReference>
<dbReference type="GO" id="GO:0050727">
    <property type="term" value="P:regulation of inflammatory response"/>
    <property type="evidence" value="ECO:0007669"/>
    <property type="project" value="Ensembl"/>
</dbReference>
<dbReference type="GO" id="GO:2000628">
    <property type="term" value="P:regulation of miRNA metabolic process"/>
    <property type="evidence" value="ECO:0007669"/>
    <property type="project" value="Ensembl"/>
</dbReference>
<dbReference type="GO" id="GO:0045589">
    <property type="term" value="P:regulation of regulatory T cell differentiation"/>
    <property type="evidence" value="ECO:0007669"/>
    <property type="project" value="Ensembl"/>
</dbReference>
<dbReference type="GO" id="GO:0006364">
    <property type="term" value="P:rRNA processing"/>
    <property type="evidence" value="ECO:0007669"/>
    <property type="project" value="InterPro"/>
</dbReference>
<dbReference type="CDD" id="cd19877">
    <property type="entry name" value="DSRM_RNAse_III_meta_like"/>
    <property type="match status" value="1"/>
</dbReference>
<dbReference type="CDD" id="cd00593">
    <property type="entry name" value="RIBOc"/>
    <property type="match status" value="2"/>
</dbReference>
<dbReference type="DisProt" id="DP02463"/>
<dbReference type="FunFam" id="1.10.1520.10:FF:000002">
    <property type="entry name" value="Drosha ribonuclease III"/>
    <property type="match status" value="1"/>
</dbReference>
<dbReference type="FunFam" id="1.10.1520.10:FF:000003">
    <property type="entry name" value="Drosha ribonuclease III"/>
    <property type="match status" value="1"/>
</dbReference>
<dbReference type="FunFam" id="3.30.160.20:FF:000012">
    <property type="entry name" value="Drosha ribonuclease III"/>
    <property type="match status" value="1"/>
</dbReference>
<dbReference type="Gene3D" id="3.30.160.20">
    <property type="match status" value="1"/>
</dbReference>
<dbReference type="Gene3D" id="1.10.1520.10">
    <property type="entry name" value="Ribonuclease III domain"/>
    <property type="match status" value="2"/>
</dbReference>
<dbReference type="HAMAP" id="MF_00104">
    <property type="entry name" value="RNase_III"/>
    <property type="match status" value="1"/>
</dbReference>
<dbReference type="InterPro" id="IPR014720">
    <property type="entry name" value="dsRBD_dom"/>
</dbReference>
<dbReference type="InterPro" id="IPR011907">
    <property type="entry name" value="RNase_III"/>
</dbReference>
<dbReference type="InterPro" id="IPR000999">
    <property type="entry name" value="RNase_III_dom"/>
</dbReference>
<dbReference type="InterPro" id="IPR044442">
    <property type="entry name" value="RNAse_III_DSRM__animal"/>
</dbReference>
<dbReference type="InterPro" id="IPR036389">
    <property type="entry name" value="RNase_III_sf"/>
</dbReference>
<dbReference type="PANTHER" id="PTHR11207:SF0">
    <property type="entry name" value="RIBONUCLEASE 3"/>
    <property type="match status" value="1"/>
</dbReference>
<dbReference type="PANTHER" id="PTHR11207">
    <property type="entry name" value="RIBONUCLEASE III"/>
    <property type="match status" value="1"/>
</dbReference>
<dbReference type="Pfam" id="PF00035">
    <property type="entry name" value="dsrm"/>
    <property type="match status" value="1"/>
</dbReference>
<dbReference type="Pfam" id="PF14622">
    <property type="entry name" value="Ribonucleas_3_3"/>
    <property type="match status" value="1"/>
</dbReference>
<dbReference type="Pfam" id="PF00636">
    <property type="entry name" value="Ribonuclease_3"/>
    <property type="match status" value="1"/>
</dbReference>
<dbReference type="SMART" id="SM00358">
    <property type="entry name" value="DSRM"/>
    <property type="match status" value="1"/>
</dbReference>
<dbReference type="SMART" id="SM00535">
    <property type="entry name" value="RIBOc"/>
    <property type="match status" value="2"/>
</dbReference>
<dbReference type="SUPFAM" id="SSF54768">
    <property type="entry name" value="dsRNA-binding domain-like"/>
    <property type="match status" value="1"/>
</dbReference>
<dbReference type="SUPFAM" id="SSF69065">
    <property type="entry name" value="RNase III domain-like"/>
    <property type="match status" value="2"/>
</dbReference>
<dbReference type="PROSITE" id="PS50137">
    <property type="entry name" value="DS_RBD"/>
    <property type="match status" value="1"/>
</dbReference>
<dbReference type="PROSITE" id="PS00517">
    <property type="entry name" value="RNASE_3_1"/>
    <property type="match status" value="2"/>
</dbReference>
<dbReference type="PROSITE" id="PS50142">
    <property type="entry name" value="RNASE_3_2"/>
    <property type="match status" value="2"/>
</dbReference>
<proteinExistence type="evidence at protein level"/>
<reference key="1">
    <citation type="journal article" date="2000" name="J. Biol. Chem.">
        <title>Human RNase III is a 160-kDa protein involved in preribosomal RNA processing.</title>
        <authorList>
            <person name="Wu H."/>
            <person name="Xu H."/>
            <person name="Miraglia L.J."/>
            <person name="Crooke S.T."/>
        </authorList>
    </citation>
    <scope>NUCLEOTIDE SEQUENCE [MRNA] (ISOFORM 1)</scope>
    <scope>FUNCTION</scope>
    <scope>TISSUE SPECIFICITY</scope>
    <scope>SUBCELLULAR LOCATION</scope>
</reference>
<reference key="2">
    <citation type="journal article" date="2007" name="BMC Genomics">
        <title>The full-ORF clone resource of the German cDNA consortium.</title>
        <authorList>
            <person name="Bechtel S."/>
            <person name="Rosenfelder H."/>
            <person name="Duda A."/>
            <person name="Schmidt C.P."/>
            <person name="Ernst U."/>
            <person name="Wellenreuther R."/>
            <person name="Mehrle A."/>
            <person name="Schuster C."/>
            <person name="Bahr A."/>
            <person name="Bloecker H."/>
            <person name="Heubner D."/>
            <person name="Hoerlein A."/>
            <person name="Michel G."/>
            <person name="Wedler H."/>
            <person name="Koehrer K."/>
            <person name="Ottenwaelder B."/>
            <person name="Poustka A."/>
            <person name="Wiemann S."/>
            <person name="Schupp I."/>
        </authorList>
    </citation>
    <scope>NUCLEOTIDE SEQUENCE [LARGE SCALE MRNA] (ISOFORM 4)</scope>
    <source>
        <tissue>Cerebellum</tissue>
    </source>
</reference>
<reference key="3">
    <citation type="journal article" date="2004" name="Nature">
        <title>The DNA sequence and comparative analysis of human chromosome 5.</title>
        <authorList>
            <person name="Schmutz J."/>
            <person name="Martin J."/>
            <person name="Terry A."/>
            <person name="Couronne O."/>
            <person name="Grimwood J."/>
            <person name="Lowry S."/>
            <person name="Gordon L.A."/>
            <person name="Scott D."/>
            <person name="Xie G."/>
            <person name="Huang W."/>
            <person name="Hellsten U."/>
            <person name="Tran-Gyamfi M."/>
            <person name="She X."/>
            <person name="Prabhakar S."/>
            <person name="Aerts A."/>
            <person name="Altherr M."/>
            <person name="Bajorek E."/>
            <person name="Black S."/>
            <person name="Branscomb E."/>
            <person name="Caoile C."/>
            <person name="Challacombe J.F."/>
            <person name="Chan Y.M."/>
            <person name="Denys M."/>
            <person name="Detter J.C."/>
            <person name="Escobar J."/>
            <person name="Flowers D."/>
            <person name="Fotopulos D."/>
            <person name="Glavina T."/>
            <person name="Gomez M."/>
            <person name="Gonzales E."/>
            <person name="Goodstein D."/>
            <person name="Grigoriev I."/>
            <person name="Groza M."/>
            <person name="Hammon N."/>
            <person name="Hawkins T."/>
            <person name="Haydu L."/>
            <person name="Israni S."/>
            <person name="Jett J."/>
            <person name="Kadner K."/>
            <person name="Kimball H."/>
            <person name="Kobayashi A."/>
            <person name="Lopez F."/>
            <person name="Lou Y."/>
            <person name="Martinez D."/>
            <person name="Medina C."/>
            <person name="Morgan J."/>
            <person name="Nandkeshwar R."/>
            <person name="Noonan J.P."/>
            <person name="Pitluck S."/>
            <person name="Pollard M."/>
            <person name="Predki P."/>
            <person name="Priest J."/>
            <person name="Ramirez L."/>
            <person name="Retterer J."/>
            <person name="Rodriguez A."/>
            <person name="Rogers S."/>
            <person name="Salamov A."/>
            <person name="Salazar A."/>
            <person name="Thayer N."/>
            <person name="Tice H."/>
            <person name="Tsai M."/>
            <person name="Ustaszewska A."/>
            <person name="Vo N."/>
            <person name="Wheeler J."/>
            <person name="Wu K."/>
            <person name="Yang J."/>
            <person name="Dickson M."/>
            <person name="Cheng J.-F."/>
            <person name="Eichler E.E."/>
            <person name="Olsen A."/>
            <person name="Pennacchio L.A."/>
            <person name="Rokhsar D.S."/>
            <person name="Richardson P."/>
            <person name="Lucas S.M."/>
            <person name="Myers R.M."/>
            <person name="Rubin E.M."/>
        </authorList>
    </citation>
    <scope>NUCLEOTIDE SEQUENCE [LARGE SCALE GENOMIC DNA]</scope>
</reference>
<reference key="4">
    <citation type="journal article" date="2000" name="Mol. Cell. Biochem.">
        <title>A set of proteins interacting with transcription factor Sp1 identified in a two-hybrid screening.</title>
        <authorList>
            <person name="Gunther M."/>
            <person name="Laithier M."/>
            <person name="Brison O."/>
        </authorList>
    </citation>
    <scope>NUCLEOTIDE SEQUENCE [MRNA] OF 166-613 (ISOFORM 2)</scope>
    <scope>INTERACTION WITH SP1</scope>
    <source>
        <tissue>Colon</tissue>
    </source>
</reference>
<reference key="5">
    <citation type="journal article" date="2004" name="Nat. Genet.">
        <title>Complete sequencing and characterization of 21,243 full-length human cDNAs.</title>
        <authorList>
            <person name="Ota T."/>
            <person name="Suzuki Y."/>
            <person name="Nishikawa T."/>
            <person name="Otsuki T."/>
            <person name="Sugiyama T."/>
            <person name="Irie R."/>
            <person name="Wakamatsu A."/>
            <person name="Hayashi K."/>
            <person name="Sato H."/>
            <person name="Nagai K."/>
            <person name="Kimura K."/>
            <person name="Makita H."/>
            <person name="Sekine M."/>
            <person name="Obayashi M."/>
            <person name="Nishi T."/>
            <person name="Shibahara T."/>
            <person name="Tanaka T."/>
            <person name="Ishii S."/>
            <person name="Yamamoto J."/>
            <person name="Saito K."/>
            <person name="Kawai Y."/>
            <person name="Isono Y."/>
            <person name="Nakamura Y."/>
            <person name="Nagahari K."/>
            <person name="Murakami K."/>
            <person name="Yasuda T."/>
            <person name="Iwayanagi T."/>
            <person name="Wagatsuma M."/>
            <person name="Shiratori A."/>
            <person name="Sudo H."/>
            <person name="Hosoiri T."/>
            <person name="Kaku Y."/>
            <person name="Kodaira H."/>
            <person name="Kondo H."/>
            <person name="Sugawara M."/>
            <person name="Takahashi M."/>
            <person name="Kanda K."/>
            <person name="Yokoi T."/>
            <person name="Furuya T."/>
            <person name="Kikkawa E."/>
            <person name="Omura Y."/>
            <person name="Abe K."/>
            <person name="Kamihara K."/>
            <person name="Katsuta N."/>
            <person name="Sato K."/>
            <person name="Tanikawa M."/>
            <person name="Yamazaki M."/>
            <person name="Ninomiya K."/>
            <person name="Ishibashi T."/>
            <person name="Yamashita H."/>
            <person name="Murakawa K."/>
            <person name="Fujimori K."/>
            <person name="Tanai H."/>
            <person name="Kimata M."/>
            <person name="Watanabe M."/>
            <person name="Hiraoka S."/>
            <person name="Chiba Y."/>
            <person name="Ishida S."/>
            <person name="Ono Y."/>
            <person name="Takiguchi S."/>
            <person name="Watanabe S."/>
            <person name="Yosida M."/>
            <person name="Hotuta T."/>
            <person name="Kusano J."/>
            <person name="Kanehori K."/>
            <person name="Takahashi-Fujii A."/>
            <person name="Hara H."/>
            <person name="Tanase T.-O."/>
            <person name="Nomura Y."/>
            <person name="Togiya S."/>
            <person name="Komai F."/>
            <person name="Hara R."/>
            <person name="Takeuchi K."/>
            <person name="Arita M."/>
            <person name="Imose N."/>
            <person name="Musashino K."/>
            <person name="Yuuki H."/>
            <person name="Oshima A."/>
            <person name="Sasaki N."/>
            <person name="Aotsuka S."/>
            <person name="Yoshikawa Y."/>
            <person name="Matsunawa H."/>
            <person name="Ichihara T."/>
            <person name="Shiohata N."/>
            <person name="Sano S."/>
            <person name="Moriya S."/>
            <person name="Momiyama H."/>
            <person name="Satoh N."/>
            <person name="Takami S."/>
            <person name="Terashima Y."/>
            <person name="Suzuki O."/>
            <person name="Nakagawa S."/>
            <person name="Senoh A."/>
            <person name="Mizoguchi H."/>
            <person name="Goto Y."/>
            <person name="Shimizu F."/>
            <person name="Wakebe H."/>
            <person name="Hishigaki H."/>
            <person name="Watanabe T."/>
            <person name="Sugiyama A."/>
            <person name="Takemoto M."/>
            <person name="Kawakami B."/>
            <person name="Yamazaki M."/>
            <person name="Watanabe K."/>
            <person name="Kumagai A."/>
            <person name="Itakura S."/>
            <person name="Fukuzumi Y."/>
            <person name="Fujimori Y."/>
            <person name="Komiyama M."/>
            <person name="Tashiro H."/>
            <person name="Tanigami A."/>
            <person name="Fujiwara T."/>
            <person name="Ono T."/>
            <person name="Yamada K."/>
            <person name="Fujii Y."/>
            <person name="Ozaki K."/>
            <person name="Hirao M."/>
            <person name="Ohmori Y."/>
            <person name="Kawabata A."/>
            <person name="Hikiji T."/>
            <person name="Kobatake N."/>
            <person name="Inagaki H."/>
            <person name="Ikema Y."/>
            <person name="Okamoto S."/>
            <person name="Okitani R."/>
            <person name="Kawakami T."/>
            <person name="Noguchi S."/>
            <person name="Itoh T."/>
            <person name="Shigeta K."/>
            <person name="Senba T."/>
            <person name="Matsumura K."/>
            <person name="Nakajima Y."/>
            <person name="Mizuno T."/>
            <person name="Morinaga M."/>
            <person name="Sasaki M."/>
            <person name="Togashi T."/>
            <person name="Oyama M."/>
            <person name="Hata H."/>
            <person name="Watanabe M."/>
            <person name="Komatsu T."/>
            <person name="Mizushima-Sugano J."/>
            <person name="Satoh T."/>
            <person name="Shirai Y."/>
            <person name="Takahashi Y."/>
            <person name="Nakagawa K."/>
            <person name="Okumura K."/>
            <person name="Nagase T."/>
            <person name="Nomura N."/>
            <person name="Kikuchi H."/>
            <person name="Masuho Y."/>
            <person name="Yamashita R."/>
            <person name="Nakai K."/>
            <person name="Yada T."/>
            <person name="Nakamura Y."/>
            <person name="Ohara O."/>
            <person name="Isogai T."/>
            <person name="Sugano S."/>
        </authorList>
    </citation>
    <scope>NUCLEOTIDE SEQUENCE [LARGE SCALE MRNA] OF 603-1374</scope>
    <source>
        <tissue>Embryo</tissue>
    </source>
</reference>
<reference key="6">
    <citation type="journal article" date="2004" name="Genome Res.">
        <title>The status, quality, and expansion of the NIH full-length cDNA project: the Mammalian Gene Collection (MGC).</title>
        <authorList>
            <consortium name="The MGC Project Team"/>
        </authorList>
    </citation>
    <scope>NUCLEOTIDE SEQUENCE [LARGE SCALE MRNA] (ISOFORM 3)</scope>
    <scope>NUCLEOTIDE SEQUENCE [LARGE SCALE MRNA] OF 653-1374 (ISOFORM 1)</scope>
    <source>
        <tissue>Cervix</tissue>
        <tissue>Skin</tissue>
    </source>
</reference>
<reference key="7">
    <citation type="submission" date="1998-12" db="EMBL/GenBank/DDBJ databases">
        <authorList>
            <person name="Wei Y.J."/>
            <person name="Ding J.F."/>
            <person name="Xiong H."/>
            <person name="Zhou Y."/>
            <person name="Liew C.C."/>
        </authorList>
    </citation>
    <scope>NUCLEOTIDE SEQUENCE [MRNA] OF 706-1374</scope>
    <source>
        <tissue>Aorta</tissue>
    </source>
</reference>
<reference key="8">
    <citation type="journal article" date="2003" name="Nature">
        <title>The nuclear RNase III Drosha initiates microRNA processing.</title>
        <authorList>
            <person name="Lee Y."/>
            <person name="Ahn C."/>
            <person name="Han J."/>
            <person name="Choi H."/>
            <person name="Kim J."/>
            <person name="Yim J."/>
            <person name="Lee J."/>
            <person name="Provost P."/>
            <person name="Raadmark O."/>
            <person name="Kim S."/>
            <person name="Kim V.N."/>
        </authorList>
    </citation>
    <scope>FUNCTION</scope>
</reference>
<reference key="9">
    <citation type="journal article" date="2004" name="Curr. Biol.">
        <title>The human DiGeorge syndrome critical region gene 8 and its D. melanogaster homolog are required for miRNA biogenesis.</title>
        <authorList>
            <person name="Landthaler M."/>
            <person name="Yalcin A."/>
            <person name="Tuschl T."/>
        </authorList>
    </citation>
    <scope>FUNCTION</scope>
    <scope>INTERACTION WITH DGCR8</scope>
</reference>
<reference key="10">
    <citation type="journal article" date="2004" name="Genes Dev.">
        <title>The Drosha-DGCR8 complex in primary microRNA processing.</title>
        <authorList>
            <person name="Han J."/>
            <person name="Lee Y."/>
            <person name="Yeom K.-H."/>
            <person name="Kim Y.-K."/>
            <person name="Jin H."/>
            <person name="Kim V.N."/>
        </authorList>
    </citation>
    <scope>FUNCTION</scope>
    <scope>IDENTIFICATION IN THE MICROPROCESSOR COMPLEX</scope>
    <scope>INTERACTION WITH DGCR8</scope>
    <scope>CATALYTIC ACTIVITY</scope>
    <scope>COFACTOR</scope>
    <scope>DOMAIN</scope>
    <scope>MUTAGENESIS OF GLU-993; GLU-1045; GLU-1171 AND GLU-1222</scope>
</reference>
<reference key="11">
    <citation type="journal article" date="2004" name="Nature">
        <title>The microprocessor complex mediates the genesis of microRNAs.</title>
        <authorList>
            <person name="Gregory R.I."/>
            <person name="Yan K.-P."/>
            <person name="Amuthan G."/>
            <person name="Chendrimada T."/>
            <person name="Doratotaj B."/>
            <person name="Cooch N."/>
            <person name="Shiekhattar R."/>
        </authorList>
    </citation>
    <scope>FUNCTION</scope>
    <scope>IDENTIFICATION IN THE MICROPROCESSOR COMPLEX</scope>
</reference>
<reference key="12">
    <citation type="journal article" date="2005" name="EMBO J.">
        <title>Recognition and cleavage of primary microRNA precursors by the nuclear processing enzyme Drosha.</title>
        <authorList>
            <person name="Zeng Y."/>
            <person name="Yi R."/>
            <person name="Cullen B.R."/>
        </authorList>
    </citation>
    <scope>FUNCTION</scope>
    <scope>CATALYTIC ACTIVITY</scope>
</reference>
<reference key="13">
    <citation type="journal article" date="2006" name="Cell">
        <title>Molecular basis for the recognition of primary microRNAs by the Drosha-DGCR8 complex.</title>
        <authorList>
            <person name="Han J."/>
            <person name="Lee Y."/>
            <person name="Yeom K.-H."/>
            <person name="Nam J.-W."/>
            <person name="Heo I."/>
            <person name="Rhee J.-K."/>
            <person name="Sohn S.Y."/>
            <person name="Cho Y."/>
            <person name="Zhang B.-T."/>
            <person name="Kim V.N."/>
        </authorList>
    </citation>
    <scope>FUNCTION</scope>
    <scope>IDENTIFICATION IN THE MICROPROCESSOR COMPLEX</scope>
</reference>
<reference key="14">
    <citation type="journal article" date="2006" name="EMBO Rep.">
        <title>Formation of GW bodies is a consequence of microRNA genesis.</title>
        <authorList>
            <person name="Pauley K.M."/>
            <person name="Eystathioy T."/>
            <person name="Jakymiw A."/>
            <person name="Hamel J.C."/>
            <person name="Fritzler M.J."/>
            <person name="Chan E.K.L."/>
        </authorList>
    </citation>
    <scope>FUNCTION</scope>
    <scope>SUBCELLULAR LOCATION</scope>
</reference>
<reference key="15">
    <citation type="journal article" date="2007" name="Nat. Struct. Mol. Biol.">
        <title>Heme is involved in microRNA processing.</title>
        <authorList>
            <person name="Faller M."/>
            <person name="Matsunaga M."/>
            <person name="Yin S."/>
            <person name="Loo J.A."/>
            <person name="Guo F."/>
        </authorList>
    </citation>
    <scope>FUNCTION</scope>
</reference>
<reference key="16">
    <citation type="journal article" date="2008" name="Proc. Natl. Acad. Sci. U.S.A.">
        <title>The FHA domain proteins DAWDLE in Arabidopsis and SNIP1 in humans act in small RNA biogenesis.</title>
        <authorList>
            <person name="Yu B."/>
            <person name="Bi L."/>
            <person name="Zheng B."/>
            <person name="Ji L."/>
            <person name="Chevalier D."/>
            <person name="Agarwal M."/>
            <person name="Ramachandran V."/>
            <person name="Li W."/>
            <person name="Lagrange T."/>
            <person name="Walker J.C."/>
            <person name="Chen X."/>
        </authorList>
    </citation>
    <scope>INTERACTION WITH SNIP1</scope>
</reference>
<reference key="17">
    <citation type="journal article" date="2011" name="BMC Syst. Biol.">
        <title>Initial characterization of the human central proteome.</title>
        <authorList>
            <person name="Burkard T.R."/>
            <person name="Planyavsky M."/>
            <person name="Kaupe I."/>
            <person name="Breitwieser F.P."/>
            <person name="Buerckstuemmer T."/>
            <person name="Bennett K.L."/>
            <person name="Superti-Furga G."/>
            <person name="Colinge J."/>
        </authorList>
    </citation>
    <scope>IDENTIFICATION BY MASS SPECTROMETRY [LARGE SCALE ANALYSIS]</scope>
</reference>
<reference key="18">
    <citation type="journal article" date="2011" name="Cell">
        <title>Lin28A and Lin28B inhibit let-7 microRNA biogenesis by distinct mechanisms.</title>
        <authorList>
            <person name="Piskounova E."/>
            <person name="Polytarchou C."/>
            <person name="Thornton J.E."/>
            <person name="LaPierre R.J."/>
            <person name="Pothoulakis C."/>
            <person name="Hagan J.P."/>
            <person name="Iliopoulos D."/>
            <person name="Gregory R.I."/>
        </authorList>
    </citation>
    <scope>SUBCELLULAR LOCATION</scope>
</reference>
<reference key="19">
    <citation type="journal article" date="2011" name="Sci. Signal.">
        <title>System-wide temporal characterization of the proteome and phosphoproteome of human embryonic stem cell differentiation.</title>
        <authorList>
            <person name="Rigbolt K.T."/>
            <person name="Prokhorova T.A."/>
            <person name="Akimov V."/>
            <person name="Henningsen J."/>
            <person name="Johansen P.T."/>
            <person name="Kratchmarova I."/>
            <person name="Kassem M."/>
            <person name="Mann M."/>
            <person name="Olsen J.V."/>
            <person name="Blagoev B."/>
        </authorList>
    </citation>
    <scope>PHOSPHORYLATION [LARGE SCALE ANALYSIS] AT SER-373</scope>
    <scope>IDENTIFICATION BY MASS SPECTROMETRY [LARGE SCALE ANALYSIS]</scope>
</reference>
<reference key="20">
    <citation type="journal article" date="2013" name="J. Proteome Res.">
        <title>Toward a comprehensive characterization of a human cancer cell phosphoproteome.</title>
        <authorList>
            <person name="Zhou H."/>
            <person name="Di Palma S."/>
            <person name="Preisinger C."/>
            <person name="Peng M."/>
            <person name="Polat A.N."/>
            <person name="Heck A.J."/>
            <person name="Mohammed S."/>
        </authorList>
    </citation>
    <scope>PHOSPHORYLATION [LARGE SCALE ANALYSIS] AT SER-355 AND SER-373</scope>
    <scope>IDENTIFICATION BY MASS SPECTROMETRY [LARGE SCALE ANALYSIS]</scope>
    <source>
        <tissue>Cervix carcinoma</tissue>
        <tissue>Erythroleukemia</tissue>
    </source>
</reference>
<reference key="21">
    <citation type="journal article" date="2015" name="Cell">
        <title>Functional anatomy of the human microprocessor.</title>
        <authorList>
            <person name="Nguyen T.A."/>
            <person name="Jo M.H."/>
            <person name="Choi Y.G."/>
            <person name="Park J."/>
            <person name="Kwon S.C."/>
            <person name="Hohng S."/>
            <person name="Kim V.N."/>
            <person name="Woo J.S."/>
        </authorList>
    </citation>
    <scope>FUNCTION</scope>
    <scope>SUBUNIT</scope>
    <scope>CATALYTIC ACTIVITY</scope>
    <scope>MUTAGENESIS OF GLU-1045 AND GLU-1222</scope>
</reference>
<reference key="22">
    <citation type="journal article" date="2020" name="Nat. Chem. Biol.">
        <title>Differential roles of human PUS10 in miRNA processing and tRNA pseudouridylation.</title>
        <authorList>
            <person name="Song J."/>
            <person name="Zhuang Y."/>
            <person name="Zhu C."/>
            <person name="Meng H."/>
            <person name="Lu B."/>
            <person name="Xie B."/>
            <person name="Peng J."/>
            <person name="Li M."/>
            <person name="Yi C."/>
        </authorList>
    </citation>
    <scope>INTERACTION WITH PUS10</scope>
</reference>
<reference key="23">
    <citation type="journal article" date="2010" name="Silence">
        <title>Solution structure of the Drosha double-stranded RNA-binding domain.</title>
        <authorList>
            <person name="Mueller G.A."/>
            <person name="Miller M.T."/>
            <person name="Derose E.F."/>
            <person name="Ghosh M."/>
            <person name="London R.E."/>
            <person name="Hall T.M."/>
        </authorList>
    </citation>
    <scope>STRUCTURE BY NMR OF 1259-1337</scope>
</reference>
<reference key="24">
    <citation type="journal article" date="2016" name="Cell">
        <title>Structure of human DROSHA.</title>
        <authorList>
            <person name="Kwon S.C."/>
            <person name="Nguyen T.A."/>
            <person name="Choi Y.G."/>
            <person name="Jo M.H."/>
            <person name="Hohng S."/>
            <person name="Kim V.N."/>
            <person name="Woo J.S."/>
        </authorList>
    </citation>
    <scope>X-RAY CRYSTALLOGRAPHY (3.20 ANGSTROMS) OF 411-1365 OF MUTANT GLN-1045/GLN-1222 IN COMPLEX WITH DGCR8 AND ZINC IONS</scope>
    <scope>FUNCTION</scope>
    <scope>CATALYTIC ACTIVITY</scope>
    <scope>INTERACTION WITH DGCR8</scope>
    <scope>SUBUNIT</scope>
    <scope>MUTAGENESIS OF CYS-536; CYS-538; CYS-561; 622-ARG-PHE-623; CYS-676; 835-ARG-ARG-836; ARG-914; ARG-923; TYR-927; 938-ARG--LYS-940; VAL-1077; LEU-1194 AND VAL-1243</scope>
    <scope>REGION</scope>
</reference>
<organism>
    <name type="scientific">Homo sapiens</name>
    <name type="common">Human</name>
    <dbReference type="NCBI Taxonomy" id="9606"/>
    <lineage>
        <taxon>Eukaryota</taxon>
        <taxon>Metazoa</taxon>
        <taxon>Chordata</taxon>
        <taxon>Craniata</taxon>
        <taxon>Vertebrata</taxon>
        <taxon>Euteleostomi</taxon>
        <taxon>Mammalia</taxon>
        <taxon>Eutheria</taxon>
        <taxon>Euarchontoglires</taxon>
        <taxon>Primates</taxon>
        <taxon>Haplorrhini</taxon>
        <taxon>Catarrhini</taxon>
        <taxon>Hominidae</taxon>
        <taxon>Homo</taxon>
    </lineage>
</organism>